<keyword id="KW-0963">Cytoplasm</keyword>
<keyword id="KW-0489">Methyltransferase</keyword>
<keyword id="KW-1185">Reference proteome</keyword>
<keyword id="KW-0698">rRNA processing</keyword>
<keyword id="KW-0949">S-adenosyl-L-methionine</keyword>
<keyword id="KW-0808">Transferase</keyword>
<sequence length="209" mass="23373">MTNKKQSASSQRWLKEHFDDKYVQEAQKKGWRSRAVFKLDEVQSRDKLLRPAMTVVDLGAAPGSWSQYLAEKVGDKGQVIACDILPMDSLAGVDFLQGDFREEAVLSALLKRIDGKNVDVVLSDMAPNMSGNNSVDQAGSMYLVELALDMCNQVLKKNGAFIVKVFQGEGFDQFLQDVRNSFKTVKIRKPDASRARSREVYIVATGYKL</sequence>
<evidence type="ECO:0000255" key="1">
    <source>
        <dbReference type="HAMAP-Rule" id="MF_01547"/>
    </source>
</evidence>
<reference key="1">
    <citation type="journal article" date="2005" name="Genome Res.">
        <title>Coping with cold: the genome of the versatile marine Antarctica bacterium Pseudoalteromonas haloplanktis TAC125.</title>
        <authorList>
            <person name="Medigue C."/>
            <person name="Krin E."/>
            <person name="Pascal G."/>
            <person name="Barbe V."/>
            <person name="Bernsel A."/>
            <person name="Bertin P.N."/>
            <person name="Cheung F."/>
            <person name="Cruveiller S."/>
            <person name="D'Amico S."/>
            <person name="Duilio A."/>
            <person name="Fang G."/>
            <person name="Feller G."/>
            <person name="Ho C."/>
            <person name="Mangenot S."/>
            <person name="Marino G."/>
            <person name="Nilsson J."/>
            <person name="Parrilli E."/>
            <person name="Rocha E.P.C."/>
            <person name="Rouy Z."/>
            <person name="Sekowska A."/>
            <person name="Tutino M.L."/>
            <person name="Vallenet D."/>
            <person name="von Heijne G."/>
            <person name="Danchin A."/>
        </authorList>
    </citation>
    <scope>NUCLEOTIDE SEQUENCE [LARGE SCALE GENOMIC DNA]</scope>
    <source>
        <strain>TAC 125</strain>
    </source>
</reference>
<protein>
    <recommendedName>
        <fullName evidence="1">Ribosomal RNA large subunit methyltransferase E</fullName>
        <ecNumber evidence="1">2.1.1.166</ecNumber>
    </recommendedName>
    <alternativeName>
        <fullName evidence="1">23S rRNA Um2552 methyltransferase</fullName>
    </alternativeName>
    <alternativeName>
        <fullName evidence="1">rRNA (uridine-2'-O-)-methyltransferase</fullName>
    </alternativeName>
</protein>
<comment type="function">
    <text evidence="1">Specifically methylates the uridine in position 2552 of 23S rRNA at the 2'-O position of the ribose in the fully assembled 50S ribosomal subunit.</text>
</comment>
<comment type="catalytic activity">
    <reaction evidence="1">
        <text>uridine(2552) in 23S rRNA + S-adenosyl-L-methionine = 2'-O-methyluridine(2552) in 23S rRNA + S-adenosyl-L-homocysteine + H(+)</text>
        <dbReference type="Rhea" id="RHEA:42720"/>
        <dbReference type="Rhea" id="RHEA-COMP:10202"/>
        <dbReference type="Rhea" id="RHEA-COMP:10203"/>
        <dbReference type="ChEBI" id="CHEBI:15378"/>
        <dbReference type="ChEBI" id="CHEBI:57856"/>
        <dbReference type="ChEBI" id="CHEBI:59789"/>
        <dbReference type="ChEBI" id="CHEBI:65315"/>
        <dbReference type="ChEBI" id="CHEBI:74478"/>
        <dbReference type="EC" id="2.1.1.166"/>
    </reaction>
</comment>
<comment type="subcellular location">
    <subcellularLocation>
        <location evidence="1">Cytoplasm</location>
    </subcellularLocation>
</comment>
<comment type="similarity">
    <text evidence="1">Belongs to the class I-like SAM-binding methyltransferase superfamily. RNA methyltransferase RlmE family.</text>
</comment>
<accession>Q3IE64</accession>
<proteinExistence type="inferred from homology"/>
<gene>
    <name evidence="1" type="primary">rlmE</name>
    <name evidence="1" type="synonym">ftsJ</name>
    <name evidence="1" type="synonym">rrmJ</name>
    <name type="ordered locus">PSHAa0869</name>
</gene>
<name>RLME_PSET1</name>
<feature type="chain" id="PRO_0000282774" description="Ribosomal RNA large subunit methyltransferase E">
    <location>
        <begin position="1"/>
        <end position="209"/>
    </location>
</feature>
<feature type="active site" description="Proton acceptor" evidence="1">
    <location>
        <position position="164"/>
    </location>
</feature>
<feature type="binding site" evidence="1">
    <location>
        <position position="63"/>
    </location>
    <ligand>
        <name>S-adenosyl-L-methionine</name>
        <dbReference type="ChEBI" id="CHEBI:59789"/>
    </ligand>
</feature>
<feature type="binding site" evidence="1">
    <location>
        <position position="65"/>
    </location>
    <ligand>
        <name>S-adenosyl-L-methionine</name>
        <dbReference type="ChEBI" id="CHEBI:59789"/>
    </ligand>
</feature>
<feature type="binding site" evidence="1">
    <location>
        <position position="83"/>
    </location>
    <ligand>
        <name>S-adenosyl-L-methionine</name>
        <dbReference type="ChEBI" id="CHEBI:59789"/>
    </ligand>
</feature>
<feature type="binding site" evidence="1">
    <location>
        <position position="99"/>
    </location>
    <ligand>
        <name>S-adenosyl-L-methionine</name>
        <dbReference type="ChEBI" id="CHEBI:59789"/>
    </ligand>
</feature>
<feature type="binding site" evidence="1">
    <location>
        <position position="124"/>
    </location>
    <ligand>
        <name>S-adenosyl-L-methionine</name>
        <dbReference type="ChEBI" id="CHEBI:59789"/>
    </ligand>
</feature>
<organism>
    <name type="scientific">Pseudoalteromonas translucida (strain TAC 125)</name>
    <dbReference type="NCBI Taxonomy" id="326442"/>
    <lineage>
        <taxon>Bacteria</taxon>
        <taxon>Pseudomonadati</taxon>
        <taxon>Pseudomonadota</taxon>
        <taxon>Gammaproteobacteria</taxon>
        <taxon>Alteromonadales</taxon>
        <taxon>Pseudoalteromonadaceae</taxon>
        <taxon>Pseudoalteromonas</taxon>
    </lineage>
</organism>
<dbReference type="EC" id="2.1.1.166" evidence="1"/>
<dbReference type="EMBL" id="CR954246">
    <property type="protein sequence ID" value="CAI85950.1"/>
    <property type="molecule type" value="Genomic_DNA"/>
</dbReference>
<dbReference type="SMR" id="Q3IE64"/>
<dbReference type="STRING" id="326442.PSHAa0869"/>
<dbReference type="KEGG" id="pha:PSHAa0869"/>
<dbReference type="PATRIC" id="fig|326442.8.peg.832"/>
<dbReference type="eggNOG" id="COG0293">
    <property type="taxonomic scope" value="Bacteria"/>
</dbReference>
<dbReference type="HOGENOM" id="CLU_009422_4_0_6"/>
<dbReference type="BioCyc" id="PHAL326442:PSHA_RS04240-MONOMER"/>
<dbReference type="Proteomes" id="UP000006843">
    <property type="component" value="Chromosome I"/>
</dbReference>
<dbReference type="GO" id="GO:0005737">
    <property type="term" value="C:cytoplasm"/>
    <property type="evidence" value="ECO:0007669"/>
    <property type="project" value="UniProtKB-SubCell"/>
</dbReference>
<dbReference type="GO" id="GO:0008650">
    <property type="term" value="F:rRNA (uridine-2'-O-)-methyltransferase activity"/>
    <property type="evidence" value="ECO:0007669"/>
    <property type="project" value="UniProtKB-UniRule"/>
</dbReference>
<dbReference type="FunFam" id="3.40.50.150:FF:000005">
    <property type="entry name" value="Ribosomal RNA large subunit methyltransferase E"/>
    <property type="match status" value="1"/>
</dbReference>
<dbReference type="Gene3D" id="3.40.50.150">
    <property type="entry name" value="Vaccinia Virus protein VP39"/>
    <property type="match status" value="1"/>
</dbReference>
<dbReference type="HAMAP" id="MF_01547">
    <property type="entry name" value="RNA_methyltr_E"/>
    <property type="match status" value="1"/>
</dbReference>
<dbReference type="InterPro" id="IPR050082">
    <property type="entry name" value="RNA_methyltr_RlmE"/>
</dbReference>
<dbReference type="InterPro" id="IPR002877">
    <property type="entry name" value="RNA_MeTrfase_FtsJ_dom"/>
</dbReference>
<dbReference type="InterPro" id="IPR015507">
    <property type="entry name" value="rRNA-MeTfrase_E"/>
</dbReference>
<dbReference type="InterPro" id="IPR029063">
    <property type="entry name" value="SAM-dependent_MTases_sf"/>
</dbReference>
<dbReference type="NCBIfam" id="NF008390">
    <property type="entry name" value="PRK11188.1"/>
    <property type="match status" value="1"/>
</dbReference>
<dbReference type="PANTHER" id="PTHR10920">
    <property type="entry name" value="RIBOSOMAL RNA METHYLTRANSFERASE"/>
    <property type="match status" value="1"/>
</dbReference>
<dbReference type="PANTHER" id="PTHR10920:SF18">
    <property type="entry name" value="RRNA METHYLTRANSFERASE 2, MITOCHONDRIAL"/>
    <property type="match status" value="1"/>
</dbReference>
<dbReference type="Pfam" id="PF01728">
    <property type="entry name" value="FtsJ"/>
    <property type="match status" value="1"/>
</dbReference>
<dbReference type="PIRSF" id="PIRSF005461">
    <property type="entry name" value="23S_rRNA_mtase"/>
    <property type="match status" value="1"/>
</dbReference>
<dbReference type="SUPFAM" id="SSF53335">
    <property type="entry name" value="S-adenosyl-L-methionine-dependent methyltransferases"/>
    <property type="match status" value="1"/>
</dbReference>